<keyword id="KW-0007">Acetylation</keyword>
<keyword id="KW-0148">Chlorophyll</keyword>
<keyword id="KW-0150">Chloroplast</keyword>
<keyword id="KW-0157">Chromophore</keyword>
<keyword id="KW-0464">Manganese</keyword>
<keyword id="KW-0472">Membrane</keyword>
<keyword id="KW-0479">Metal-binding</keyword>
<keyword id="KW-0597">Phosphoprotein</keyword>
<keyword id="KW-0602">Photosynthesis</keyword>
<keyword id="KW-0604">Photosystem II</keyword>
<keyword id="KW-0934">Plastid</keyword>
<keyword id="KW-0691">RNA editing</keyword>
<keyword id="KW-0793">Thylakoid</keyword>
<keyword id="KW-0812">Transmembrane</keyword>
<keyword id="KW-1133">Transmembrane helix</keyword>
<name>PSBC_ANTAG</name>
<dbReference type="EMBL" id="AB086179">
    <property type="protein sequence ID" value="BAC55345.1"/>
    <property type="molecule type" value="Genomic_DNA"/>
</dbReference>
<dbReference type="EMBL" id="AB087437">
    <property type="protein sequence ID" value="BAC55438.1"/>
    <property type="molecule type" value="mRNA"/>
</dbReference>
<dbReference type="RefSeq" id="NP_777409.1">
    <property type="nucleotide sequence ID" value="NC_004543.1"/>
</dbReference>
<dbReference type="SMR" id="Q85AU0"/>
<dbReference type="GeneID" id="2553398"/>
<dbReference type="GO" id="GO:0009535">
    <property type="term" value="C:chloroplast thylakoid membrane"/>
    <property type="evidence" value="ECO:0007669"/>
    <property type="project" value="UniProtKB-SubCell"/>
</dbReference>
<dbReference type="GO" id="GO:0009523">
    <property type="term" value="C:photosystem II"/>
    <property type="evidence" value="ECO:0007669"/>
    <property type="project" value="UniProtKB-KW"/>
</dbReference>
<dbReference type="GO" id="GO:0016168">
    <property type="term" value="F:chlorophyll binding"/>
    <property type="evidence" value="ECO:0007669"/>
    <property type="project" value="UniProtKB-UniRule"/>
</dbReference>
<dbReference type="GO" id="GO:0045156">
    <property type="term" value="F:electron transporter, transferring electrons within the cyclic electron transport pathway of photosynthesis activity"/>
    <property type="evidence" value="ECO:0007669"/>
    <property type="project" value="InterPro"/>
</dbReference>
<dbReference type="GO" id="GO:0046872">
    <property type="term" value="F:metal ion binding"/>
    <property type="evidence" value="ECO:0007669"/>
    <property type="project" value="UniProtKB-KW"/>
</dbReference>
<dbReference type="GO" id="GO:0009772">
    <property type="term" value="P:photosynthetic electron transport in photosystem II"/>
    <property type="evidence" value="ECO:0007669"/>
    <property type="project" value="InterPro"/>
</dbReference>
<dbReference type="FunFam" id="1.10.10.670:FF:000001">
    <property type="entry name" value="Photosystem II CP43 reaction center protein"/>
    <property type="match status" value="1"/>
</dbReference>
<dbReference type="Gene3D" id="1.10.10.670">
    <property type="entry name" value="photosystem ii from thermosynechococcus elongatus"/>
    <property type="match status" value="1"/>
</dbReference>
<dbReference type="HAMAP" id="MF_01496">
    <property type="entry name" value="PSII_PsbC_CP43"/>
    <property type="match status" value="1"/>
</dbReference>
<dbReference type="InterPro" id="IPR000932">
    <property type="entry name" value="PS_antenna-like"/>
</dbReference>
<dbReference type="InterPro" id="IPR036001">
    <property type="entry name" value="PS_II_antenna-like_sf"/>
</dbReference>
<dbReference type="InterPro" id="IPR005869">
    <property type="entry name" value="PSII_PsbC"/>
</dbReference>
<dbReference type="InterPro" id="IPR044900">
    <property type="entry name" value="PSII_PsbC_sf"/>
</dbReference>
<dbReference type="NCBIfam" id="TIGR01153">
    <property type="entry name" value="psbC"/>
    <property type="match status" value="1"/>
</dbReference>
<dbReference type="Pfam" id="PF00421">
    <property type="entry name" value="PSII"/>
    <property type="match status" value="1"/>
</dbReference>
<dbReference type="SUPFAM" id="SSF161077">
    <property type="entry name" value="Photosystem II antenna protein-like"/>
    <property type="match status" value="1"/>
</dbReference>
<sequence>MKTLYSLRRYYPVETLFNGTLALGGRDQETTGFAWWAGNARLINLSGKLLGAHVAHAGLIVFWAGAMNLFEVAHFVPEKPMYEQGLILLPHLATLGWGVGPGGEVIDTFPYFVSGVLHLISSAVLGFGGIYHSLIGPETLEESFPFFGYVWKDKNKMTTILGIHLVLLGLGAFLLVFKASFFGGVYDTWAPGGGDVREITNLTLSPSIIFGYLLKSPFGGEGWIVSVDNLEDIIGGHVWLGLICILGGIWHILTKPFAWARRALVWSGEAYLSYSLGAISVFGFIACCFVWFNNTAYPSEFYGPTGPEASQAQAFTFLVRDQRLGANVGSAQGPTGLGKYLMRSPTGEIIFGGETMRFWDLRAPWLEPLRGPNGLDLSKLKQDIQPWQERRSAEYMTHAPLGSLNSVGGVATEINAVNYVSPRSWLATSHFVLGFFFFVGHLWHAGRARAAAAGFEKGIDRDSEPVLSMTPLN</sequence>
<reference key="1">
    <citation type="journal article" date="2003" name="Nucleic Acids Res.">
        <title>The complete nucleotide sequence of the hornwort (Anthoceros formosae) chloroplast genome: insight into the earliest land plants.</title>
        <authorList>
            <person name="Kugita M."/>
            <person name="Kaneko A."/>
            <person name="Yamamoto Y."/>
            <person name="Takeya Y."/>
            <person name="Matsumoto T."/>
            <person name="Yoshinaga K."/>
        </authorList>
    </citation>
    <scope>NUCLEOTIDE SEQUENCE [LARGE SCALE GENOMIC DNA]</scope>
    <scope>RNA EDITING</scope>
</reference>
<reference key="2">
    <citation type="journal article" date="2003" name="Nucleic Acids Res.">
        <title>RNA editing in hornwort chloroplasts makes more than half the genes functional.</title>
        <authorList>
            <person name="Kugita M."/>
            <person name="Yamamoto Y."/>
            <person name="Fujikawa T."/>
            <person name="Matsumoto T."/>
            <person name="Yoshinaga K."/>
        </authorList>
    </citation>
    <scope>NUCLEOTIDE SEQUENCE [MRNA]</scope>
    <scope>RNA EDITING</scope>
    <source>
        <tissue>Thallus</tissue>
    </source>
</reference>
<geneLocation type="chloroplast"/>
<comment type="function">
    <text evidence="1">One of the components of the core complex of photosystem II (PSII). It binds chlorophyll and helps catalyze the primary light-induced photochemical processes of PSII. PSII is a light-driven water:plastoquinone oxidoreductase, using light energy to abstract electrons from H(2)O, generating O(2) and a proton gradient subsequently used for ATP formation.</text>
</comment>
<comment type="cofactor">
    <text evidence="1">Binds multiple chlorophylls and provides some of the ligands for the Ca-4Mn-5O cluster of the oxygen-evolving complex. It may also provide a ligand for a Cl- that is required for oxygen evolution. PSII binds additional chlorophylls, carotenoids and specific lipids.</text>
</comment>
<comment type="subunit">
    <text evidence="1">PSII is composed of 1 copy each of membrane proteins PsbA, PsbB, PsbC, PsbD, PsbE, PsbF, PsbH, PsbI, PsbJ, PsbK, PsbL, PsbM, PsbT, PsbX, PsbY, PsbZ, Psb30/Ycf12, at least 3 peripheral proteins of the oxygen-evolving complex and a large number of cofactors. It forms dimeric complexes.</text>
</comment>
<comment type="subcellular location">
    <subcellularLocation>
        <location evidence="1">Plastid</location>
        <location evidence="1">Chloroplast thylakoid membrane</location>
        <topology evidence="1">Multi-pass membrane protein</topology>
    </subcellularLocation>
</comment>
<comment type="RNA editing">
    <location>
        <position position="56" evidence="2 3"/>
    </location>
    <location>
        <position position="173" evidence="2 3"/>
    </location>
    <location>
        <position position="190" evidence="2 3"/>
    </location>
    <location>
        <position position="267" evidence="2 3"/>
    </location>
    <location>
        <position position="344" evidence="2 3"/>
    </location>
    <location>
        <position position="391" evidence="2 3"/>
    </location>
    <location>
        <position position="471" evidence="2 3"/>
    </location>
    <text>The nonsense codon at position 391 is modified to a sense codon.</text>
</comment>
<comment type="similarity">
    <text evidence="1">Belongs to the PsbB/PsbC family. PsbC subfamily.</text>
</comment>
<feature type="propeptide" id="PRO_0000431111" evidence="1">
    <location>
        <begin position="1"/>
        <end position="14"/>
    </location>
</feature>
<feature type="chain" id="PRO_0000077507" description="Photosystem II CP43 reaction center protein" evidence="1">
    <location>
        <begin position="15"/>
        <end position="473"/>
    </location>
</feature>
<feature type="transmembrane region" description="Helical" evidence="1">
    <location>
        <begin position="69"/>
        <end position="93"/>
    </location>
</feature>
<feature type="transmembrane region" description="Helical" evidence="1">
    <location>
        <begin position="134"/>
        <end position="155"/>
    </location>
</feature>
<feature type="transmembrane region" description="Helical" evidence="1">
    <location>
        <begin position="178"/>
        <end position="200"/>
    </location>
</feature>
<feature type="transmembrane region" description="Helical" evidence="1">
    <location>
        <begin position="255"/>
        <end position="275"/>
    </location>
</feature>
<feature type="transmembrane region" description="Helical" evidence="1">
    <location>
        <begin position="291"/>
        <end position="312"/>
    </location>
</feature>
<feature type="transmembrane region" description="Helical" evidence="1">
    <location>
        <begin position="447"/>
        <end position="471"/>
    </location>
</feature>
<feature type="binding site" evidence="1">
    <location>
        <position position="367"/>
    </location>
    <ligand>
        <name>[CaMn4O5] cluster</name>
        <dbReference type="ChEBI" id="CHEBI:189552"/>
    </ligand>
</feature>
<feature type="modified residue" description="N-acetylthreonine" evidence="1">
    <location>
        <position position="15"/>
    </location>
</feature>
<feature type="modified residue" description="Phosphothreonine" evidence="1">
    <location>
        <position position="15"/>
    </location>
</feature>
<organism>
    <name type="scientific">Anthoceros angustus</name>
    <name type="common">Hornwort</name>
    <name type="synonym">Anthoceros formosae</name>
    <dbReference type="NCBI Taxonomy" id="48387"/>
    <lineage>
        <taxon>Eukaryota</taxon>
        <taxon>Viridiplantae</taxon>
        <taxon>Streptophyta</taxon>
        <taxon>Embryophyta</taxon>
        <taxon>Anthocerotophyta</taxon>
        <taxon>Anthocerotopsida</taxon>
        <taxon>Anthocerotidae</taxon>
        <taxon>Anthocerotales</taxon>
        <taxon>Anthocerotaceae</taxon>
        <taxon>Anthoceros</taxon>
    </lineage>
</organism>
<evidence type="ECO:0000255" key="1">
    <source>
        <dbReference type="HAMAP-Rule" id="MF_01496"/>
    </source>
</evidence>
<evidence type="ECO:0000269" key="2">
    <source>
    </source>
</evidence>
<evidence type="ECO:0000269" key="3">
    <source>
    </source>
</evidence>
<gene>
    <name evidence="1" type="primary">psbC</name>
</gene>
<protein>
    <recommendedName>
        <fullName evidence="1">Photosystem II CP43 reaction center protein</fullName>
    </recommendedName>
    <alternativeName>
        <fullName evidence="1">PSII 43 kDa protein</fullName>
    </alternativeName>
    <alternativeName>
        <fullName evidence="1">Protein CP-43</fullName>
    </alternativeName>
</protein>
<proteinExistence type="evidence at transcript level"/>
<accession>Q85AU0</accession>